<keyword id="KW-0002">3D-structure</keyword>
<keyword id="KW-0025">Alternative splicing</keyword>
<keyword id="KW-0963">Cytoplasm</keyword>
<keyword id="KW-0225">Disease variant</keyword>
<keyword id="KW-0539">Nucleus</keyword>
<keyword id="KW-0597">Phosphoprotein</keyword>
<keyword id="KW-1267">Proteomics identification</keyword>
<keyword id="KW-1185">Reference proteome</keyword>
<keyword id="KW-0677">Repeat</keyword>
<keyword id="KW-0804">Transcription</keyword>
<keyword id="KW-0805">Transcription regulation</keyword>
<keyword id="KW-0853">WD repeat</keyword>
<organism>
    <name type="scientific">Homo sapiens</name>
    <name type="common">Human</name>
    <dbReference type="NCBI Taxonomy" id="9606"/>
    <lineage>
        <taxon>Eukaryota</taxon>
        <taxon>Metazoa</taxon>
        <taxon>Chordata</taxon>
        <taxon>Craniata</taxon>
        <taxon>Vertebrata</taxon>
        <taxon>Euteleostomi</taxon>
        <taxon>Mammalia</taxon>
        <taxon>Eutheria</taxon>
        <taxon>Euarchontoglires</taxon>
        <taxon>Primates</taxon>
        <taxon>Haplorrhini</taxon>
        <taxon>Catarrhini</taxon>
        <taxon>Hominidae</taxon>
        <taxon>Homo</taxon>
    </lineage>
</organism>
<feature type="chain" id="PRO_0000051286" description="Transducin-like enhancer protein 6">
    <location>
        <begin position="1"/>
        <end position="572"/>
    </location>
</feature>
<feature type="repeat" description="WD 1">
    <location>
        <begin position="284"/>
        <end position="322"/>
    </location>
</feature>
<feature type="repeat" description="WD 2">
    <location>
        <begin position="332"/>
        <end position="372"/>
    </location>
</feature>
<feature type="repeat" description="WD 3">
    <location>
        <begin position="377"/>
        <end position="416"/>
    </location>
</feature>
<feature type="repeat" description="WD 4">
    <location>
        <begin position="419"/>
        <end position="456"/>
    </location>
</feature>
<feature type="repeat" description="WD 5">
    <location>
        <begin position="458"/>
        <end position="497"/>
    </location>
</feature>
<feature type="repeat" description="WD 6">
    <location>
        <begin position="499"/>
        <end position="538"/>
    </location>
</feature>
<feature type="repeat" description="WD 7">
    <location>
        <begin position="540"/>
        <end position="571"/>
    </location>
</feature>
<feature type="region of interest" description="Disordered" evidence="2">
    <location>
        <begin position="1"/>
        <end position="30"/>
    </location>
</feature>
<feature type="region of interest" description="Disordered" evidence="2">
    <location>
        <begin position="92"/>
        <end position="121"/>
    </location>
</feature>
<feature type="region of interest" description="Disordered" evidence="2">
    <location>
        <begin position="174"/>
        <end position="236"/>
    </location>
</feature>
<feature type="compositionally biased region" description="Polar residues" evidence="2">
    <location>
        <begin position="14"/>
        <end position="30"/>
    </location>
</feature>
<feature type="modified residue" description="Phosphoserine; by PKA" evidence="4">
    <location>
        <position position="510"/>
    </location>
</feature>
<feature type="splice variant" id="VSP_047216" description="In isoform 2." evidence="11 12">
    <location>
        <begin position="1"/>
        <end position="123"/>
    </location>
</feature>
<feature type="sequence variant" id="VAR_084162" description="In OZEMA15." evidence="6 7">
    <original>Q</original>
    <variation>H</variation>
    <location>
        <position position="74"/>
    </location>
</feature>
<feature type="sequence variant" id="VAR_084163" description="In OZEMA15; uncertain significance; dbSNP:rs769137034." evidence="5">
    <original>D</original>
    <variation>N</variation>
    <location>
        <position position="130"/>
    </location>
</feature>
<feature type="sequence variant" id="VAR_084164" description="In OZEMA15; uncertain significance." evidence="6">
    <original>A</original>
    <variation>G</variation>
    <location>
        <position position="240"/>
    </location>
</feature>
<feature type="sequence variant" id="VAR_084165" description="In OZEMA15; uncertain significance." evidence="6">
    <original>T</original>
    <variation>R</variation>
    <location>
        <position position="298"/>
    </location>
</feature>
<feature type="sequence variant" id="VAR_084166" description="In OZEMA15; uncertain significance; dbSNP:rs763793074." evidence="6">
    <original>R</original>
    <variation>H</variation>
    <location>
        <position position="338"/>
    </location>
</feature>
<feature type="sequence variant" id="VAR_090321" description="In OZEMA15; uncertain significance." evidence="8">
    <original>G</original>
    <variation>R</variation>
    <location>
        <position position="352"/>
    </location>
</feature>
<feature type="sequence variant" id="VAR_090322" description="In OZEMA15; impaired formation of the SCMC complex." evidence="10">
    <original>A</original>
    <variation>T</variation>
    <location>
        <position position="396"/>
    </location>
</feature>
<feature type="sequence variant" id="VAR_084167" description="In OZEMA15; uncertain significance; dbSNP:rs1310808966." evidence="5">
    <original>R</original>
    <variation>Q</variation>
    <location>
        <position position="409"/>
    </location>
</feature>
<feature type="sequence variant" id="VAR_084168" description="In OZEMA15; uncertain significance." evidence="6">
    <location>
        <begin position="446"/>
        <end position="572"/>
    </location>
</feature>
<feature type="sequence variant" id="VAR_084169" description="In OZEMA15; uncertain significance; dbSNP:rs551247575." evidence="5">
    <original>V</original>
    <variation>I</variation>
    <location>
        <position position="503"/>
    </location>
</feature>
<feature type="sequence variant" id="VAR_076246" description="In OZEMA15; almost complete loss of phosphorylation and reduced interaction with KHDC3L and OOEP; dbSNP:rs767222404." evidence="4">
    <original>S</original>
    <variation>Y</variation>
    <location>
        <position position="510"/>
    </location>
</feature>
<feature type="sequence variant" id="VAR_084170" description="In OZEMA15; uncertain significance." evidence="6">
    <original>D</original>
    <variation>H</variation>
    <location>
        <position position="522"/>
    </location>
</feature>
<feature type="sequence variant" id="VAR_084171" description="In OZEMA15; uncertain significance; dbSNP:rs1176718387." evidence="5">
    <original>E</original>
    <variation>K</variation>
    <location>
        <position position="541"/>
    </location>
</feature>
<feature type="strand" evidence="19">
    <location>
        <begin position="148"/>
        <end position="150"/>
    </location>
</feature>
<feature type="helix" evidence="19">
    <location>
        <begin position="155"/>
        <end position="168"/>
    </location>
</feature>
<feature type="helix" evidence="19">
    <location>
        <begin position="251"/>
        <end position="253"/>
    </location>
</feature>
<feature type="strand" evidence="19">
    <location>
        <begin position="276"/>
        <end position="284"/>
    </location>
</feature>
<feature type="strand" evidence="19">
    <location>
        <begin position="291"/>
        <end position="294"/>
    </location>
</feature>
<feature type="strand" evidence="19">
    <location>
        <begin position="296"/>
        <end position="298"/>
    </location>
</feature>
<feature type="strand" evidence="19">
    <location>
        <begin position="301"/>
        <end position="305"/>
    </location>
</feature>
<feature type="strand" evidence="19">
    <location>
        <begin position="308"/>
        <end position="312"/>
    </location>
</feature>
<feature type="strand" evidence="19">
    <location>
        <begin position="319"/>
        <end position="321"/>
    </location>
</feature>
<feature type="strand" evidence="19">
    <location>
        <begin position="325"/>
        <end position="329"/>
    </location>
</feature>
<feature type="strand" evidence="19">
    <location>
        <begin position="339"/>
        <end position="342"/>
    </location>
</feature>
<feature type="strand" evidence="19">
    <location>
        <begin position="346"/>
        <end position="352"/>
    </location>
</feature>
<feature type="strand" evidence="19">
    <location>
        <begin position="357"/>
        <end position="368"/>
    </location>
</feature>
<feature type="strand" evidence="19">
    <location>
        <begin position="370"/>
        <end position="376"/>
    </location>
</feature>
<feature type="strand" evidence="19">
    <location>
        <begin position="382"/>
        <end position="388"/>
    </location>
</feature>
<feature type="turn" evidence="19">
    <location>
        <begin position="389"/>
        <end position="392"/>
    </location>
</feature>
<feature type="strand" evidence="19">
    <location>
        <begin position="393"/>
        <end position="398"/>
    </location>
</feature>
<feature type="turn" evidence="19">
    <location>
        <begin position="399"/>
        <end position="401"/>
    </location>
</feature>
<feature type="strand" evidence="19">
    <location>
        <begin position="402"/>
        <end position="407"/>
    </location>
</feature>
<feature type="turn" evidence="19">
    <location>
        <begin position="408"/>
        <end position="410"/>
    </location>
</feature>
<feature type="strand" evidence="19">
    <location>
        <begin position="413"/>
        <end position="418"/>
    </location>
</feature>
<feature type="strand" evidence="19">
    <location>
        <begin position="425"/>
        <end position="430"/>
    </location>
</feature>
<feature type="strand" evidence="19">
    <location>
        <begin position="433"/>
        <end position="437"/>
    </location>
</feature>
<feature type="strand" evidence="19">
    <location>
        <begin position="441"/>
        <end position="450"/>
    </location>
</feature>
<feature type="strand" evidence="19">
    <location>
        <begin position="455"/>
        <end position="458"/>
    </location>
</feature>
<feature type="strand" evidence="19">
    <location>
        <begin position="465"/>
        <end position="468"/>
    </location>
</feature>
<feature type="strand" evidence="19">
    <location>
        <begin position="470"/>
        <end position="473"/>
    </location>
</feature>
<feature type="strand" evidence="19">
    <location>
        <begin position="475"/>
        <end position="478"/>
    </location>
</feature>
<feature type="strand" evidence="19">
    <location>
        <begin position="480"/>
        <end position="487"/>
    </location>
</feature>
<feature type="strand" evidence="19">
    <location>
        <begin position="489"/>
        <end position="491"/>
    </location>
</feature>
<feature type="strand" evidence="19">
    <location>
        <begin position="494"/>
        <end position="499"/>
    </location>
</feature>
<feature type="strand" evidence="19">
    <location>
        <begin position="504"/>
        <end position="509"/>
    </location>
</feature>
<feature type="strand" evidence="19">
    <location>
        <begin position="513"/>
        <end position="529"/>
    </location>
</feature>
<feature type="turn" evidence="19">
    <location>
        <begin position="530"/>
        <end position="532"/>
    </location>
</feature>
<feature type="strand" evidence="19">
    <location>
        <begin position="535"/>
        <end position="540"/>
    </location>
</feature>
<feature type="strand" evidence="19">
    <location>
        <begin position="545"/>
        <end position="550"/>
    </location>
</feature>
<feature type="strand" evidence="19">
    <location>
        <begin position="552"/>
        <end position="561"/>
    </location>
</feature>
<feature type="strand" evidence="19">
    <location>
        <begin position="564"/>
        <end position="571"/>
    </location>
</feature>
<reference key="1">
    <citation type="journal article" date="2004" name="Nat. Genet.">
        <title>Complete sequencing and characterization of 21,243 full-length human cDNAs.</title>
        <authorList>
            <person name="Ota T."/>
            <person name="Suzuki Y."/>
            <person name="Nishikawa T."/>
            <person name="Otsuki T."/>
            <person name="Sugiyama T."/>
            <person name="Irie R."/>
            <person name="Wakamatsu A."/>
            <person name="Hayashi K."/>
            <person name="Sato H."/>
            <person name="Nagai K."/>
            <person name="Kimura K."/>
            <person name="Makita H."/>
            <person name="Sekine M."/>
            <person name="Obayashi M."/>
            <person name="Nishi T."/>
            <person name="Shibahara T."/>
            <person name="Tanaka T."/>
            <person name="Ishii S."/>
            <person name="Yamamoto J."/>
            <person name="Saito K."/>
            <person name="Kawai Y."/>
            <person name="Isono Y."/>
            <person name="Nakamura Y."/>
            <person name="Nagahari K."/>
            <person name="Murakami K."/>
            <person name="Yasuda T."/>
            <person name="Iwayanagi T."/>
            <person name="Wagatsuma M."/>
            <person name="Shiratori A."/>
            <person name="Sudo H."/>
            <person name="Hosoiri T."/>
            <person name="Kaku Y."/>
            <person name="Kodaira H."/>
            <person name="Kondo H."/>
            <person name="Sugawara M."/>
            <person name="Takahashi M."/>
            <person name="Kanda K."/>
            <person name="Yokoi T."/>
            <person name="Furuya T."/>
            <person name="Kikkawa E."/>
            <person name="Omura Y."/>
            <person name="Abe K."/>
            <person name="Kamihara K."/>
            <person name="Katsuta N."/>
            <person name="Sato K."/>
            <person name="Tanikawa M."/>
            <person name="Yamazaki M."/>
            <person name="Ninomiya K."/>
            <person name="Ishibashi T."/>
            <person name="Yamashita H."/>
            <person name="Murakawa K."/>
            <person name="Fujimori K."/>
            <person name="Tanai H."/>
            <person name="Kimata M."/>
            <person name="Watanabe M."/>
            <person name="Hiraoka S."/>
            <person name="Chiba Y."/>
            <person name="Ishida S."/>
            <person name="Ono Y."/>
            <person name="Takiguchi S."/>
            <person name="Watanabe S."/>
            <person name="Yosida M."/>
            <person name="Hotuta T."/>
            <person name="Kusano J."/>
            <person name="Kanehori K."/>
            <person name="Takahashi-Fujii A."/>
            <person name="Hara H."/>
            <person name="Tanase T.-O."/>
            <person name="Nomura Y."/>
            <person name="Togiya S."/>
            <person name="Komai F."/>
            <person name="Hara R."/>
            <person name="Takeuchi K."/>
            <person name="Arita M."/>
            <person name="Imose N."/>
            <person name="Musashino K."/>
            <person name="Yuuki H."/>
            <person name="Oshima A."/>
            <person name="Sasaki N."/>
            <person name="Aotsuka S."/>
            <person name="Yoshikawa Y."/>
            <person name="Matsunawa H."/>
            <person name="Ichihara T."/>
            <person name="Shiohata N."/>
            <person name="Sano S."/>
            <person name="Moriya S."/>
            <person name="Momiyama H."/>
            <person name="Satoh N."/>
            <person name="Takami S."/>
            <person name="Terashima Y."/>
            <person name="Suzuki O."/>
            <person name="Nakagawa S."/>
            <person name="Senoh A."/>
            <person name="Mizoguchi H."/>
            <person name="Goto Y."/>
            <person name="Shimizu F."/>
            <person name="Wakebe H."/>
            <person name="Hishigaki H."/>
            <person name="Watanabe T."/>
            <person name="Sugiyama A."/>
            <person name="Takemoto M."/>
            <person name="Kawakami B."/>
            <person name="Yamazaki M."/>
            <person name="Watanabe K."/>
            <person name="Kumagai A."/>
            <person name="Itakura S."/>
            <person name="Fukuzumi Y."/>
            <person name="Fujimori Y."/>
            <person name="Komiyama M."/>
            <person name="Tashiro H."/>
            <person name="Tanigami A."/>
            <person name="Fujiwara T."/>
            <person name="Ono T."/>
            <person name="Yamada K."/>
            <person name="Fujii Y."/>
            <person name="Ozaki K."/>
            <person name="Hirao M."/>
            <person name="Ohmori Y."/>
            <person name="Kawabata A."/>
            <person name="Hikiji T."/>
            <person name="Kobatake N."/>
            <person name="Inagaki H."/>
            <person name="Ikema Y."/>
            <person name="Okamoto S."/>
            <person name="Okitani R."/>
            <person name="Kawakami T."/>
            <person name="Noguchi S."/>
            <person name="Itoh T."/>
            <person name="Shigeta K."/>
            <person name="Senba T."/>
            <person name="Matsumura K."/>
            <person name="Nakajima Y."/>
            <person name="Mizuno T."/>
            <person name="Morinaga M."/>
            <person name="Sasaki M."/>
            <person name="Togashi T."/>
            <person name="Oyama M."/>
            <person name="Hata H."/>
            <person name="Watanabe M."/>
            <person name="Komatsu T."/>
            <person name="Mizushima-Sugano J."/>
            <person name="Satoh T."/>
            <person name="Shirai Y."/>
            <person name="Takahashi Y."/>
            <person name="Nakagawa K."/>
            <person name="Okumura K."/>
            <person name="Nagase T."/>
            <person name="Nomura N."/>
            <person name="Kikuchi H."/>
            <person name="Masuho Y."/>
            <person name="Yamashita R."/>
            <person name="Nakai K."/>
            <person name="Yada T."/>
            <person name="Nakamura Y."/>
            <person name="Ohara O."/>
            <person name="Isogai T."/>
            <person name="Sugano S."/>
        </authorList>
    </citation>
    <scope>NUCLEOTIDE SEQUENCE [LARGE SCALE MRNA] (ISOFORM 2)</scope>
</reference>
<reference key="2">
    <citation type="journal article" date="2004" name="Nature">
        <title>The DNA sequence and biology of human chromosome 19.</title>
        <authorList>
            <person name="Grimwood J."/>
            <person name="Gordon L.A."/>
            <person name="Olsen A.S."/>
            <person name="Terry A."/>
            <person name="Schmutz J."/>
            <person name="Lamerdin J.E."/>
            <person name="Hellsten U."/>
            <person name="Goodstein D."/>
            <person name="Couronne O."/>
            <person name="Tran-Gyamfi M."/>
            <person name="Aerts A."/>
            <person name="Altherr M."/>
            <person name="Ashworth L."/>
            <person name="Bajorek E."/>
            <person name="Black S."/>
            <person name="Branscomb E."/>
            <person name="Caenepeel S."/>
            <person name="Carrano A.V."/>
            <person name="Caoile C."/>
            <person name="Chan Y.M."/>
            <person name="Christensen M."/>
            <person name="Cleland C.A."/>
            <person name="Copeland A."/>
            <person name="Dalin E."/>
            <person name="Dehal P."/>
            <person name="Denys M."/>
            <person name="Detter J.C."/>
            <person name="Escobar J."/>
            <person name="Flowers D."/>
            <person name="Fotopulos D."/>
            <person name="Garcia C."/>
            <person name="Georgescu A.M."/>
            <person name="Glavina T."/>
            <person name="Gomez M."/>
            <person name="Gonzales E."/>
            <person name="Groza M."/>
            <person name="Hammon N."/>
            <person name="Hawkins T."/>
            <person name="Haydu L."/>
            <person name="Ho I."/>
            <person name="Huang W."/>
            <person name="Israni S."/>
            <person name="Jett J."/>
            <person name="Kadner K."/>
            <person name="Kimball H."/>
            <person name="Kobayashi A."/>
            <person name="Larionov V."/>
            <person name="Leem S.-H."/>
            <person name="Lopez F."/>
            <person name="Lou Y."/>
            <person name="Lowry S."/>
            <person name="Malfatti S."/>
            <person name="Martinez D."/>
            <person name="McCready P.M."/>
            <person name="Medina C."/>
            <person name="Morgan J."/>
            <person name="Nelson K."/>
            <person name="Nolan M."/>
            <person name="Ovcharenko I."/>
            <person name="Pitluck S."/>
            <person name="Pollard M."/>
            <person name="Popkie A.P."/>
            <person name="Predki P."/>
            <person name="Quan G."/>
            <person name="Ramirez L."/>
            <person name="Rash S."/>
            <person name="Retterer J."/>
            <person name="Rodriguez A."/>
            <person name="Rogers S."/>
            <person name="Salamov A."/>
            <person name="Salazar A."/>
            <person name="She X."/>
            <person name="Smith D."/>
            <person name="Slezak T."/>
            <person name="Solovyev V."/>
            <person name="Thayer N."/>
            <person name="Tice H."/>
            <person name="Tsai M."/>
            <person name="Ustaszewska A."/>
            <person name="Vo N."/>
            <person name="Wagner M."/>
            <person name="Wheeler J."/>
            <person name="Wu K."/>
            <person name="Xie G."/>
            <person name="Yang J."/>
            <person name="Dubchak I."/>
            <person name="Furey T.S."/>
            <person name="DeJong P."/>
            <person name="Dickson M."/>
            <person name="Gordon D."/>
            <person name="Eichler E.E."/>
            <person name="Pennacchio L.A."/>
            <person name="Richardson P."/>
            <person name="Stubbs L."/>
            <person name="Rokhsar D.S."/>
            <person name="Myers R.M."/>
            <person name="Rubin E.M."/>
            <person name="Lucas S.M."/>
        </authorList>
    </citation>
    <scope>NUCLEOTIDE SEQUENCE [LARGE SCALE GENOMIC DNA]</scope>
</reference>
<reference key="3">
    <citation type="journal article" date="2004" name="Genome Res.">
        <title>The status, quality, and expansion of the NIH full-length cDNA project: the Mammalian Gene Collection (MGC).</title>
        <authorList>
            <consortium name="The MGC Project Team"/>
        </authorList>
    </citation>
    <scope>NUCLEOTIDE SEQUENCE [LARGE SCALE MRNA] (ISOFORMS 1 AND 2)</scope>
    <source>
        <tissue>Lung</tissue>
    </source>
</reference>
<reference key="4">
    <citation type="journal article" date="2008" name="Genome Biol.">
        <title>The Groucho/TLE/Grg family of transcriptional co-repressors.</title>
        <authorList>
            <person name="Jennings B.H."/>
            <person name="Ish-Horowicz D."/>
        </authorList>
    </citation>
    <scope>REVIEW</scope>
</reference>
<reference key="5">
    <citation type="journal article" date="2015" name="Genome Biol.">
        <title>TLE6 mutation causes the earliest known human embryonic lethality.</title>
        <authorList>
            <person name="Alazami A.M."/>
            <person name="Awad S.M."/>
            <person name="Coskun S."/>
            <person name="Al-Hassan S."/>
            <person name="Hijazi H."/>
            <person name="Abdulwahab F.M."/>
            <person name="Poizat C."/>
            <person name="Alkuraya F.S."/>
        </authorList>
    </citation>
    <scope>FUNCTION</scope>
    <scope>INTERACTION WITH KHDC3L AND OOEP</scope>
    <scope>PHOSPHORYLATION AT SER-510</scope>
    <scope>VARIANT OZEMA15 TYR-510</scope>
    <scope>CHARACTERIZATION OF VARIANT OZEMA15 TYR-510</scope>
</reference>
<reference key="6">
    <citation type="journal article" date="2015" name="Mol. Hum. Reprod.">
        <title>Identification of a human subcortical maternal complex.</title>
        <authorList>
            <person name="Zhu K."/>
            <person name="Yan L."/>
            <person name="Zhang X."/>
            <person name="Lu X."/>
            <person name="Wang T."/>
            <person name="Yan J."/>
            <person name="Liu X."/>
            <person name="Qiao J."/>
            <person name="Li L."/>
        </authorList>
    </citation>
    <scope>IDENTIFICATION IN THE SCMC COMPLEX</scope>
    <scope>SUBCELLULAR LOCATION</scope>
    <scope>DEVELOPMENTAL STAGE</scope>
</reference>
<reference key="7">
    <citation type="journal article" date="2023" name="Cell">
        <title>Mammalian oocytes store proteins for the early embryo on cytoplasmic lattices.</title>
        <authorList>
            <person name="Jentoft I.M.A."/>
            <person name="Baeuerlein F.J.B."/>
            <person name="Welp L.M."/>
            <person name="Cooper B.H."/>
            <person name="Petrovic A."/>
            <person name="So C."/>
            <person name="Penir S.M."/>
            <person name="Politi A.Z."/>
            <person name="Horokhovskyi Y."/>
            <person name="Takala I."/>
            <person name="Eckel H."/>
            <person name="Moltrecht R."/>
            <person name="Lenart P."/>
            <person name="Cavazza T."/>
            <person name="Liepe J."/>
            <person name="Brose N."/>
            <person name="Urlaub H."/>
            <person name="Fernandez-Busnadiego R."/>
            <person name="Schuh M."/>
        </authorList>
    </citation>
    <scope>SUBCELLULAR LOCATION</scope>
</reference>
<reference evidence="17 18" key="8">
    <citation type="journal article" date="2024" name="Nat. Struct. Mol. Biol.">
        <title>Cryo-EM structure of the human subcortical maternal complex and the associated discovery of infertility-associated variants.</title>
        <authorList>
            <person name="Chi P."/>
            <person name="Ou G."/>
            <person name="Liu S."/>
            <person name="Ma Q."/>
            <person name="Lu Y."/>
            <person name="Li J."/>
            <person name="Li J."/>
            <person name="Qi Q."/>
            <person name="Han Z."/>
            <person name="Zhang Z."/>
            <person name="Liu Q."/>
            <person name="Guo L."/>
            <person name="Chen J."/>
            <person name="Wang X."/>
            <person name="Huang W."/>
            <person name="Li L."/>
            <person name="Deng D."/>
        </authorList>
    </citation>
    <scope>STRUCTURE BY ELECTRON MICROSCOPY (3.01 ANGSTROMS) OF 146-572 IN COMPLEX WITH NLRP5 AND OOEP</scope>
    <scope>IDENTIFICATION IN THE SCMC COMPLEX</scope>
    <scope>VARIANT OZEMA15 THR-396</scope>
    <scope>CHARACTERIZATION OF VARIANT OZEMA15 THR-396</scope>
</reference>
<reference key="9">
    <citation type="journal article" date="2021" name="Clin. Genet.">
        <title>Expanding the genetic and phenotypic spectrum of the subcortical maternal complex genes in recurrent preimplantation embryonic arrest.</title>
        <authorList>
            <person name="Zheng W."/>
            <person name="Hu H."/>
            <person name="Dai J."/>
            <person name="Zhang S."/>
            <person name="Gu Y."/>
            <person name="Dai C."/>
            <person name="Guo J."/>
            <person name="Xu X."/>
            <person name="Li Y."/>
            <person name="Zhang S."/>
            <person name="Hu L."/>
            <person name="Gong F."/>
            <person name="Lu G."/>
            <person name="Lin G."/>
        </authorList>
    </citation>
    <scope>VARIANTS OZEMA15 HIS-74; GLY-240; ARG-298; HIS-338; 446-TRP--TYR-572 DEL AND HIS-522</scope>
</reference>
<reference key="10">
    <citation type="journal article" date="2020" name="J. Assist. Reprod. Genet.">
        <title>Expanding the genetic and phenotypic spectrum of female infertility caused by TLE6 mutations.</title>
        <authorList>
            <person name="Lin J."/>
            <person name="Xu H."/>
            <person name="Chen B."/>
            <person name="Wang W."/>
            <person name="Wang L."/>
            <person name="Sun X."/>
            <person name="Sang Q."/>
        </authorList>
    </citation>
    <scope>VARIANTS OZEMA15 ASN-130; GLN-409; ILE-503 AND LYS-541</scope>
</reference>
<reference key="11">
    <citation type="journal article" date="2021" name="Front. Genet.">
        <title>Identification of Novel Biallelic TLE6 Variants in Female Infertility With Preimplantation Embryonic Lethality.</title>
        <authorList>
            <person name="Zhang M."/>
            <person name="Liu C."/>
            <person name="Chen B."/>
            <person name="Lv M."/>
            <person name="Zou H."/>
            <person name="Liu Y."/>
            <person name="Gao Y."/>
            <person name="Wang T."/>
            <person name="Xing Q."/>
            <person name="Zhu Y."/>
            <person name="Wu H."/>
            <person name="Zhang Z."/>
            <person name="Zhou P."/>
            <person name="Wei Z."/>
            <person name="He X."/>
            <person name="Xu Y."/>
            <person name="Cao Y."/>
        </authorList>
    </citation>
    <scope>VARIANT OZEMA15 HIS-74</scope>
</reference>
<reference key="12">
    <citation type="journal article" date="2022" name="Sci. Rep.">
        <title>A novel variant in TLE6 is associated with embryonic developmental arrest (EDA) in familial female infertility.</title>
        <authorList>
            <person name="Akbari M."/>
            <person name="Mohebi M."/>
            <person name="Berjis K."/>
            <person name="Ghahremani A."/>
            <person name="Modarressi M.H."/>
            <person name="Ghafouri-Fard S."/>
        </authorList>
    </citation>
    <scope>VARIANT OZEMA15 ARG-352</scope>
</reference>
<protein>
    <recommendedName>
        <fullName evidence="14">Transducin-like enhancer protein 6</fullName>
    </recommendedName>
</protein>
<dbReference type="EMBL" id="AK024071">
    <property type="protein sequence ID" value="BAB14815.1"/>
    <property type="molecule type" value="mRNA"/>
</dbReference>
<dbReference type="EMBL" id="AC006277">
    <property type="status" value="NOT_ANNOTATED_CDS"/>
    <property type="molecule type" value="Genomic_DNA"/>
</dbReference>
<dbReference type="EMBL" id="AC007766">
    <property type="status" value="NOT_ANNOTATED_CDS"/>
    <property type="molecule type" value="Genomic_DNA"/>
</dbReference>
<dbReference type="EMBL" id="BC007215">
    <property type="protein sequence ID" value="AAH07215.1"/>
    <property type="molecule type" value="mRNA"/>
</dbReference>
<dbReference type="EMBL" id="BC020206">
    <property type="protein sequence ID" value="AAH20206.1"/>
    <property type="status" value="ALT_INIT"/>
    <property type="molecule type" value="mRNA"/>
</dbReference>
<dbReference type="CCDS" id="CCDS12100.1">
    <molecule id="Q9H808-2"/>
</dbReference>
<dbReference type="CCDS" id="CCDS45910.1">
    <molecule id="Q9H808-1"/>
</dbReference>
<dbReference type="RefSeq" id="NP_001137458.1">
    <molecule id="Q9H808-1"/>
    <property type="nucleotide sequence ID" value="NM_001143986.2"/>
</dbReference>
<dbReference type="RefSeq" id="NP_079036.1">
    <molecule id="Q9H808-2"/>
    <property type="nucleotide sequence ID" value="NM_024760.3"/>
</dbReference>
<dbReference type="RefSeq" id="XP_005259702.1">
    <molecule id="Q9H808-1"/>
    <property type="nucleotide sequence ID" value="XM_005259645.3"/>
</dbReference>
<dbReference type="RefSeq" id="XP_011526602.1">
    <molecule id="Q9H808-1"/>
    <property type="nucleotide sequence ID" value="XM_011528300.3"/>
</dbReference>
<dbReference type="RefSeq" id="XP_011526603.1">
    <molecule id="Q9H808-2"/>
    <property type="nucleotide sequence ID" value="XM_011528301.3"/>
</dbReference>
<dbReference type="RefSeq" id="XP_024307490.1">
    <molecule id="Q9H808-2"/>
    <property type="nucleotide sequence ID" value="XM_024451722.2"/>
</dbReference>
<dbReference type="RefSeq" id="XP_024307491.1">
    <molecule id="Q9H808-2"/>
    <property type="nucleotide sequence ID" value="XM_024451723.2"/>
</dbReference>
<dbReference type="RefSeq" id="XP_054178160.1">
    <molecule id="Q9H808-1"/>
    <property type="nucleotide sequence ID" value="XM_054322185.1"/>
</dbReference>
<dbReference type="RefSeq" id="XP_054178161.1">
    <molecule id="Q9H808-1"/>
    <property type="nucleotide sequence ID" value="XM_054322186.1"/>
</dbReference>
<dbReference type="RefSeq" id="XP_054178162.1">
    <molecule id="Q9H808-2"/>
    <property type="nucleotide sequence ID" value="XM_054322187.1"/>
</dbReference>
<dbReference type="RefSeq" id="XP_054178163.1">
    <molecule id="Q9H808-2"/>
    <property type="nucleotide sequence ID" value="XM_054322188.1"/>
</dbReference>
<dbReference type="RefSeq" id="XP_054178164.1">
    <molecule id="Q9H808-2"/>
    <property type="nucleotide sequence ID" value="XM_054322189.1"/>
</dbReference>
<dbReference type="PDB" id="8X7V">
    <property type="method" value="EM"/>
    <property type="resolution" value="3.01 A"/>
    <property type="chains" value="C=146-572"/>
</dbReference>
<dbReference type="PDB" id="8X7W">
    <property type="method" value="EM"/>
    <property type="resolution" value="3.36 A"/>
    <property type="chains" value="C/F=146-572"/>
</dbReference>
<dbReference type="PDBsum" id="8X7V"/>
<dbReference type="PDBsum" id="8X7W"/>
<dbReference type="EMDB" id="EMD-38128"/>
<dbReference type="EMDB" id="EMD-38129"/>
<dbReference type="SMR" id="Q9H808"/>
<dbReference type="BioGRID" id="122911">
    <property type="interactions" value="22"/>
</dbReference>
<dbReference type="ComplexPortal" id="CPX-2210">
    <molecule id="Q9H808-1"/>
    <property type="entry name" value="Subcortical maternal complex"/>
</dbReference>
<dbReference type="CORUM" id="Q9H808"/>
<dbReference type="FunCoup" id="Q9H808">
    <property type="interactions" value="240"/>
</dbReference>
<dbReference type="IntAct" id="Q9H808">
    <property type="interactions" value="8"/>
</dbReference>
<dbReference type="STRING" id="9606.ENSP00000246112"/>
<dbReference type="iPTMnet" id="Q9H808"/>
<dbReference type="PhosphoSitePlus" id="Q9H808"/>
<dbReference type="BioMuta" id="TLE6"/>
<dbReference type="DMDM" id="519668658"/>
<dbReference type="MassIVE" id="Q9H808"/>
<dbReference type="PaxDb" id="9606-ENSP00000246112"/>
<dbReference type="PeptideAtlas" id="Q9H808"/>
<dbReference type="ProteomicsDB" id="81165">
    <molecule id="Q9H808-1"/>
</dbReference>
<dbReference type="Antibodypedia" id="23085">
    <property type="antibodies" value="76 antibodies from 17 providers"/>
</dbReference>
<dbReference type="DNASU" id="79816"/>
<dbReference type="Ensembl" id="ENST00000246112.9">
    <molecule id="Q9H808-1"/>
    <property type="protein sequence ID" value="ENSP00000246112.3"/>
    <property type="gene ID" value="ENSG00000104953.20"/>
</dbReference>
<dbReference type="Ensembl" id="ENST00000452088.5">
    <molecule id="Q9H808-2"/>
    <property type="protein sequence ID" value="ENSP00000406893.1"/>
    <property type="gene ID" value="ENSG00000104953.20"/>
</dbReference>
<dbReference type="GeneID" id="79816"/>
<dbReference type="KEGG" id="hsa:79816"/>
<dbReference type="MANE-Select" id="ENST00000246112.9">
    <property type="protein sequence ID" value="ENSP00000246112.3"/>
    <property type="RefSeq nucleotide sequence ID" value="NM_001143986.2"/>
    <property type="RefSeq protein sequence ID" value="NP_001137458.1"/>
</dbReference>
<dbReference type="UCSC" id="uc002lwt.3">
    <molecule id="Q9H808-1"/>
    <property type="organism name" value="human"/>
</dbReference>
<dbReference type="AGR" id="HGNC:30788"/>
<dbReference type="CTD" id="79816"/>
<dbReference type="DisGeNET" id="79816"/>
<dbReference type="GeneCards" id="TLE6"/>
<dbReference type="HGNC" id="HGNC:30788">
    <property type="gene designation" value="TLE6"/>
</dbReference>
<dbReference type="HPA" id="ENSG00000104953">
    <property type="expression patterns" value="Tissue enhanced (thyroid)"/>
</dbReference>
<dbReference type="MalaCards" id="TLE6"/>
<dbReference type="MIM" id="612399">
    <property type="type" value="gene"/>
</dbReference>
<dbReference type="MIM" id="616814">
    <property type="type" value="phenotype"/>
</dbReference>
<dbReference type="neXtProt" id="NX_Q9H808"/>
<dbReference type="OpenTargets" id="ENSG00000104953"/>
<dbReference type="PharmGKB" id="PA134948893"/>
<dbReference type="VEuPathDB" id="HostDB:ENSG00000104953"/>
<dbReference type="eggNOG" id="KOG0639">
    <property type="taxonomic scope" value="Eukaryota"/>
</dbReference>
<dbReference type="GeneTree" id="ENSGT01030000234519"/>
<dbReference type="HOGENOM" id="CLU_007612_1_0_1"/>
<dbReference type="InParanoid" id="Q9H808"/>
<dbReference type="OMA" id="KEELPCA"/>
<dbReference type="OrthoDB" id="9837721at2759"/>
<dbReference type="PAN-GO" id="Q9H808">
    <property type="GO annotations" value="4 GO annotations based on evolutionary models"/>
</dbReference>
<dbReference type="PhylomeDB" id="Q9H808"/>
<dbReference type="TreeFam" id="TF314167"/>
<dbReference type="PathwayCommons" id="Q9H808"/>
<dbReference type="SignaLink" id="Q9H808"/>
<dbReference type="SIGNOR" id="Q9H808"/>
<dbReference type="BioGRID-ORCS" id="79816">
    <property type="hits" value="12 hits in 1152 CRISPR screens"/>
</dbReference>
<dbReference type="ChiTaRS" id="TLE6">
    <property type="organism name" value="human"/>
</dbReference>
<dbReference type="GenomeRNAi" id="79816"/>
<dbReference type="Pharos" id="Q9H808">
    <property type="development level" value="Tbio"/>
</dbReference>
<dbReference type="PRO" id="PR:Q9H808"/>
<dbReference type="Proteomes" id="UP000005640">
    <property type="component" value="Chromosome 19"/>
</dbReference>
<dbReference type="RNAct" id="Q9H808">
    <property type="molecule type" value="protein"/>
</dbReference>
<dbReference type="Bgee" id="ENSG00000104953">
    <property type="expression patterns" value="Expressed in oocyte and 111 other cell types or tissues"/>
</dbReference>
<dbReference type="ExpressionAtlas" id="Q9H808">
    <property type="expression patterns" value="baseline and differential"/>
</dbReference>
<dbReference type="GO" id="GO:0005938">
    <property type="term" value="C:cell cortex"/>
    <property type="evidence" value="ECO:0000250"/>
    <property type="project" value="UniProtKB"/>
</dbReference>
<dbReference type="GO" id="GO:0005737">
    <property type="term" value="C:cytoplasm"/>
    <property type="evidence" value="ECO:0000314"/>
    <property type="project" value="UniProtKB"/>
</dbReference>
<dbReference type="GO" id="GO:0140095">
    <property type="term" value="C:cytoplasmic lattice"/>
    <property type="evidence" value="ECO:0000314"/>
    <property type="project" value="UniProtKB"/>
</dbReference>
<dbReference type="GO" id="GO:0005634">
    <property type="term" value="C:nucleus"/>
    <property type="evidence" value="ECO:0000318"/>
    <property type="project" value="GO_Central"/>
</dbReference>
<dbReference type="GO" id="GO:0032991">
    <property type="term" value="C:protein-containing complex"/>
    <property type="evidence" value="ECO:0000315"/>
    <property type="project" value="UniProtKB"/>
</dbReference>
<dbReference type="GO" id="GO:0097225">
    <property type="term" value="C:sperm midpiece"/>
    <property type="evidence" value="ECO:0000250"/>
    <property type="project" value="UniProtKB"/>
</dbReference>
<dbReference type="GO" id="GO:0106333">
    <property type="term" value="C:subcortical maternal complex"/>
    <property type="evidence" value="ECO:0000314"/>
    <property type="project" value="UniProtKB"/>
</dbReference>
<dbReference type="GO" id="GO:0005667">
    <property type="term" value="C:transcription regulator complex"/>
    <property type="evidence" value="ECO:0000318"/>
    <property type="project" value="GO_Central"/>
</dbReference>
<dbReference type="GO" id="GO:0140094">
    <property type="term" value="F:structural constituent of cytoplasmic lattice"/>
    <property type="evidence" value="ECO:0000314"/>
    <property type="project" value="UniProtKB"/>
</dbReference>
<dbReference type="GO" id="GO:0003714">
    <property type="term" value="F:transcription corepressor activity"/>
    <property type="evidence" value="ECO:0000318"/>
    <property type="project" value="GO_Central"/>
</dbReference>
<dbReference type="GO" id="GO:0007015">
    <property type="term" value="P:actin filament organization"/>
    <property type="evidence" value="ECO:0000250"/>
    <property type="project" value="UniProtKB"/>
</dbReference>
<dbReference type="GO" id="GO:0060136">
    <property type="term" value="P:embryonic process involved in female pregnancy"/>
    <property type="evidence" value="ECO:0000315"/>
    <property type="project" value="UniProtKB"/>
</dbReference>
<dbReference type="GO" id="GO:0051643">
    <property type="term" value="P:endoplasmic reticulum localization"/>
    <property type="evidence" value="ECO:0000250"/>
    <property type="project" value="UniProtKB"/>
</dbReference>
<dbReference type="GO" id="GO:0044725">
    <property type="term" value="P:epigenetic programming in the zygotic pronuclei"/>
    <property type="evidence" value="ECO:0000250"/>
    <property type="project" value="UniProtKB"/>
</dbReference>
<dbReference type="GO" id="GO:0051293">
    <property type="term" value="P:establishment of spindle localization"/>
    <property type="evidence" value="ECO:0000250"/>
    <property type="project" value="UniProtKB"/>
</dbReference>
<dbReference type="GO" id="GO:0030317">
    <property type="term" value="P:flagellated sperm motility"/>
    <property type="evidence" value="ECO:0000250"/>
    <property type="project" value="UniProtKB"/>
</dbReference>
<dbReference type="GO" id="GO:0051646">
    <property type="term" value="P:mitochondrion localization"/>
    <property type="evidence" value="ECO:0000250"/>
    <property type="project" value="UniProtKB"/>
</dbReference>
<dbReference type="GO" id="GO:0090090">
    <property type="term" value="P:negative regulation of canonical Wnt signaling pathway"/>
    <property type="evidence" value="ECO:0000318"/>
    <property type="project" value="GO_Central"/>
</dbReference>
<dbReference type="GO" id="GO:0000122">
    <property type="term" value="P:negative regulation of transcription by RNA polymerase II"/>
    <property type="evidence" value="ECO:0000250"/>
    <property type="project" value="UniProtKB"/>
</dbReference>
<dbReference type="GO" id="GO:0040019">
    <property type="term" value="P:positive regulation of embryonic development"/>
    <property type="evidence" value="ECO:0000250"/>
    <property type="project" value="UniProtKB"/>
</dbReference>
<dbReference type="GO" id="GO:0140089">
    <property type="term" value="P:protein storage"/>
    <property type="evidence" value="ECO:0000314"/>
    <property type="project" value="UniProtKB"/>
</dbReference>
<dbReference type="GO" id="GO:0051302">
    <property type="term" value="P:regulation of cell division"/>
    <property type="evidence" value="ECO:0000250"/>
    <property type="project" value="UniProtKB"/>
</dbReference>
<dbReference type="GO" id="GO:0007283">
    <property type="term" value="P:spermatogenesis"/>
    <property type="evidence" value="ECO:0000250"/>
    <property type="project" value="UniProtKB"/>
</dbReference>
<dbReference type="FunFam" id="2.130.10.10:FF:000546">
    <property type="entry name" value="TLE family member 6, subcortical maternal complex member"/>
    <property type="match status" value="1"/>
</dbReference>
<dbReference type="Gene3D" id="2.130.10.10">
    <property type="entry name" value="YVTN repeat-like/Quinoprotein amine dehydrogenase"/>
    <property type="match status" value="1"/>
</dbReference>
<dbReference type="InterPro" id="IPR009146">
    <property type="entry name" value="Groucho_enhance"/>
</dbReference>
<dbReference type="InterPro" id="IPR015943">
    <property type="entry name" value="WD40/YVTN_repeat-like_dom_sf"/>
</dbReference>
<dbReference type="InterPro" id="IPR036322">
    <property type="entry name" value="WD40_repeat_dom_sf"/>
</dbReference>
<dbReference type="InterPro" id="IPR001680">
    <property type="entry name" value="WD40_rpt"/>
</dbReference>
<dbReference type="PANTHER" id="PTHR10814">
    <property type="entry name" value="TRANSDUCIN-LIKE ENHANCER PROTEIN"/>
    <property type="match status" value="1"/>
</dbReference>
<dbReference type="PANTHER" id="PTHR10814:SF2">
    <property type="entry name" value="TRANSDUCIN-LIKE ENHANCER PROTEIN 6"/>
    <property type="match status" value="1"/>
</dbReference>
<dbReference type="Pfam" id="PF00400">
    <property type="entry name" value="WD40"/>
    <property type="match status" value="2"/>
</dbReference>
<dbReference type="PRINTS" id="PR01850">
    <property type="entry name" value="GROUCHOFAMLY"/>
</dbReference>
<dbReference type="SMART" id="SM00320">
    <property type="entry name" value="WD40"/>
    <property type="match status" value="6"/>
</dbReference>
<dbReference type="SUPFAM" id="SSF50978">
    <property type="entry name" value="WD40 repeat-like"/>
    <property type="match status" value="1"/>
</dbReference>
<dbReference type="PROSITE" id="PS50294">
    <property type="entry name" value="WD_REPEATS_REGION"/>
    <property type="match status" value="1"/>
</dbReference>
<comment type="function">
    <text evidence="1 4">Component of the subcortical maternal complex (SCMC), a multiprotein complex that plays a key role in early embryonic development (PubMed:26537248). The SCMC complex is a structural constituent of cytoplasmic lattices, which consist in fibrous structures found in the cytoplasm of oocytes and preimplantation embryos (By similarity). They are required to store maternal proteins critical for embryonic development, such as proteins that control epigenetic reprogramming of the preimplantation embryo, and prevent their degradation or activation (By similarity). Also required for spermatogenesis: regulates spermatogonia proliferation and cell cycle progression, potentially via regulation of cell cycle regulatory genes such as; CEBPB, CEBPA, CSF3, PCNA, and CDK4 (By similarity). Suppresses FOXG1/BF-1-mediated transcriptional repression by inhibiting interaction of the transcriptional corepressor TLE1 with FOXG1 which promotes cortical neuron differentiation (By similarity). Acts as a transcriptional corepressor of NFATC1-mediated gene expression by contributing to PAX6-mediated repression (By similarity).</text>
</comment>
<comment type="function">
    <molecule>Isoform 1</molecule>
    <text evidence="4">Component of the subcortical maternal complex (SCMC), a multiprotein complex that plays a key role in early embryonic development.</text>
</comment>
<comment type="subunit">
    <text evidence="1 3 4 10">Homodimers (By similarity). Component of the subcortical maternal complex (SCMC), at least composed of NLRP5, KHDC3, OOEP, and TLE6 (PubMed:25542835, PubMed:26537248, PubMed:39379527). Within the complex, interacts with NLRP5, KHDC3 and OOEP (PubMed:25542835, PubMed:26537248, PubMed:39379527). The SCMC may facilitate translocation of its components between the nuclear and cytoplasmic compartments (PubMed:25542835). As part of the SCMC interacts with the SCMC-associated protein ZBED3 (By similarity). As part of the SCMC interacts with the SCMC-associated protein NLRP4F (By similarity). As part of the SCMC interacts with the SCMC-associated protein CFL1/Cofilin-1 (By similarity). Interacts with FOXG1/BF-1; the interaction inhibits TLE1 interaction with FOXG1/BF-1 (By similarity). Interacts with NFATC1 (By similarity). Interacts with PAX6 (By similarity).</text>
</comment>
<comment type="subunit">
    <molecule>Isoform 1</molecule>
    <text evidence="3 4">Component of the subcortical maternal complex (SCMC), at least composed of NLRP5, KHDC3L, OOEP, and TLE6 isoform 1 (PubMed:25542835, PubMed:26537248). Within the complex, interacts with NLRP5, KHDC3L and OOEP (PubMed:25542835, PubMed:26537248). The SCMC may facilitate translocation of its components between the nuclear and cytoplasmic compartments (PubMed:25542835).</text>
</comment>
<comment type="interaction">
    <interactant intactId="EBI-3921684">
        <id>Q9H808</id>
    </interactant>
    <interactant intactId="EBI-12275524">
        <id>P23560-2</id>
        <label>BDNF</label>
    </interactant>
    <organismsDiffer>false</organismsDiffer>
    <experiments>3</experiments>
</comment>
<comment type="interaction">
    <interactant intactId="EBI-3921684">
        <id>Q9H808</id>
    </interactant>
    <interactant intactId="EBI-2432309">
        <id>Q92876</id>
        <label>KLK6</label>
    </interactant>
    <organismsDiffer>false</organismsDiffer>
    <experiments>3</experiments>
</comment>
<comment type="interaction">
    <interactant intactId="EBI-32711753">
        <id>Q9H808-1</id>
    </interactant>
    <interactant intactId="EBI-22731520">
        <id>Q587J8</id>
        <label>KHDC3L</label>
    </interactant>
    <organismsDiffer>false</organismsDiffer>
    <experiments>2</experiments>
</comment>
<comment type="interaction">
    <interactant intactId="EBI-32711753">
        <id>Q9H808-1</id>
    </interactant>
    <interactant intactId="EBI-11071382">
        <id>P59047</id>
        <label>NLRP5</label>
    </interactant>
    <organismsDiffer>false</organismsDiffer>
    <experiments>2</experiments>
</comment>
<comment type="interaction">
    <interactant intactId="EBI-32711753">
        <id>Q9H808-1</id>
    </interactant>
    <interactant intactId="EBI-18583589">
        <id>A6NGQ2</id>
        <label>OOEP</label>
    </interactant>
    <organismsDiffer>false</organismsDiffer>
    <experiments>2</experiments>
</comment>
<comment type="subcellular location">
    <subcellularLocation>
        <location evidence="9">Cytoplasm</location>
    </subcellularLocation>
    <subcellularLocation>
        <location evidence="1">Nucleus</location>
    </subcellularLocation>
    <text evidence="9">Core component of cytoplasmic lattices in oocytes.</text>
</comment>
<comment type="subcellular location">
    <molecule>Isoform 1</molecule>
    <subcellularLocation>
        <location evidence="3">Cytoplasm</location>
    </subcellularLocation>
</comment>
<comment type="subcellular location">
    <molecule>Isoform 2</molecule>
    <subcellularLocation>
        <location evidence="3">Cytoplasm</location>
    </subcellularLocation>
</comment>
<comment type="alternative products">
    <event type="alternative splicing"/>
    <isoform>
        <id>Q9H808-1</id>
        <name>1</name>
        <sequence type="displayed"/>
    </isoform>
    <isoform>
        <id>Q9H808-2</id>
        <name>2</name>
        <sequence type="described" ref="VSP_047216"/>
    </isoform>
</comment>
<comment type="developmental stage">
    <molecule>Isoform 1</molecule>
    <text evidence="3">Expressed in oocytes of the fetal ovary (PubMed:25542835). Expressed primarily with other SCMC components in the subcortex of oocytes and early embryos (PubMed:25542835). Expression is excluded from cell-cell contact regions after the 2-cell stage (PubMed:25542835).</text>
</comment>
<comment type="developmental stage">
    <molecule>Isoform 2</molecule>
    <text evidence="3">Expressed in the fetal kidney.</text>
</comment>
<comment type="domain">
    <text evidence="15">Contrary to other WD repeat Groucho/TLE family members, does not contain any identifiable Q, GP, CcN or SP domains. Only the C-terminal WD-repeat domain is conserved.</text>
</comment>
<comment type="disease" evidence="4 5 6 7 8 10">
    <disease id="DI-04651">
        <name>Oocyte/zygote/embryo maturation arrest 15</name>
        <acronym>OZEMA15</acronym>
        <description>A rare cause of female primary infertility. In affected women, ovulation proceeds normally and the retrieved oocytes appear normal, but zygote formation and division are severely impaired. Inheritance is autosomal recessive.</description>
        <dbReference type="MIM" id="616814"/>
    </disease>
    <text>The disease is caused by variants affecting the gene represented in this entry.</text>
</comment>
<comment type="similarity">
    <text evidence="14">Belongs to the WD repeat Groucho/TLE family.</text>
</comment>
<comment type="sequence caution" evidence="14">
    <conflict type="erroneous initiation">
        <sequence resource="EMBL-CDS" id="AAH20206"/>
    </conflict>
    <text>Truncated N-terminus.</text>
</comment>
<gene>
    <name evidence="13 16" type="primary">TLE6</name>
</gene>
<sequence length="572" mass="63473">MTSRDQPRPKGPPKSTSPCPGISNSESSPTLNYQGILNRLKQFPRFSPHFAAELESIYYSLHKIQQDVAEHHKQIGNVLQIVESCSQLQGFQSEEVSPAEPASPGTPQQVKDKTLQESSFEDIMATRSSDWLRRPLGEDNQPETQLFWDKEPWFWHDTLTEQLWRIFAGVHDEKAKPRDRQQAPGLGQESKAPGSCDPGTDPCPEDASTPRPPEASSSPPEGSQDRNTSWGVVQEPPGRASRFLQSISWDPEDFEDAWKRPDALPGQSKRLAVPCKLEKMRILAHGELVLATAISSFTRHVFTCGRRGIKVWSLTGQVAEDRFPESHLPIQTPGAFLRTCLLSSNSRSLLTGGYNLASVSVWDLAAPSLHVKEQLPCAGLNCQALDANLDANLAFASFTSGVVRIWDLRDQSVVRDLKGYPDGVKSIVVKGYNIWTGGPDACLRCWDQRTIMKPLEYQFKSQIMSLSHSPQEDWVLLGMANGQQWLQSTSGSQRHMVGQKDSVILSVKFSPFGQWWASVGMDDFLGVYSMPAGTKVFEVPEMSPVTCCDVSSNNRLVVTGSGEHASVYQITY</sequence>
<proteinExistence type="evidence at protein level"/>
<accession>Q9H808</accession>
<accession>J3KMZ1</accession>
<name>TLE6_HUMAN</name>
<evidence type="ECO:0000250" key="1">
    <source>
        <dbReference type="UniProtKB" id="Q9WVB3"/>
    </source>
</evidence>
<evidence type="ECO:0000256" key="2">
    <source>
        <dbReference type="SAM" id="MobiDB-lite"/>
    </source>
</evidence>
<evidence type="ECO:0000269" key="3">
    <source>
    </source>
</evidence>
<evidence type="ECO:0000269" key="4">
    <source>
    </source>
</evidence>
<evidence type="ECO:0000269" key="5">
    <source>
    </source>
</evidence>
<evidence type="ECO:0000269" key="6">
    <source>
    </source>
</evidence>
<evidence type="ECO:0000269" key="7">
    <source>
    </source>
</evidence>
<evidence type="ECO:0000269" key="8">
    <source>
    </source>
</evidence>
<evidence type="ECO:0000269" key="9">
    <source>
    </source>
</evidence>
<evidence type="ECO:0000269" key="10">
    <source>
    </source>
</evidence>
<evidence type="ECO:0000303" key="11">
    <source>
    </source>
</evidence>
<evidence type="ECO:0000303" key="12">
    <source>
    </source>
</evidence>
<evidence type="ECO:0000303" key="13">
    <source>
    </source>
</evidence>
<evidence type="ECO:0000305" key="14"/>
<evidence type="ECO:0000305" key="15">
    <source>
    </source>
</evidence>
<evidence type="ECO:0000312" key="16">
    <source>
        <dbReference type="HGNC" id="HGNC:30788"/>
    </source>
</evidence>
<evidence type="ECO:0007744" key="17">
    <source>
        <dbReference type="PDB" id="8X7V"/>
    </source>
</evidence>
<evidence type="ECO:0007744" key="18">
    <source>
        <dbReference type="PDB" id="8X7W"/>
    </source>
</evidence>
<evidence type="ECO:0007829" key="19">
    <source>
        <dbReference type="PDB" id="8X7V"/>
    </source>
</evidence>